<accession>B8H621</accession>
<protein>
    <recommendedName>
        <fullName evidence="1">Orotate phosphoribosyltransferase</fullName>
        <shortName evidence="1">OPRT</shortName>
        <shortName evidence="1">OPRTase</shortName>
        <ecNumber evidence="1">2.4.2.10</ecNumber>
    </recommendedName>
</protein>
<feature type="chain" id="PRO_1000164677" description="Orotate phosphoribosyltransferase">
    <location>
        <begin position="1"/>
        <end position="194"/>
    </location>
</feature>
<feature type="binding site" evidence="1">
    <location>
        <begin position="116"/>
        <end position="124"/>
    </location>
    <ligand>
        <name>5-phospho-alpha-D-ribose 1-diphosphate</name>
        <dbReference type="ChEBI" id="CHEBI:58017"/>
    </ligand>
</feature>
<feature type="binding site" evidence="1">
    <location>
        <position position="120"/>
    </location>
    <ligand>
        <name>orotate</name>
        <dbReference type="ChEBI" id="CHEBI:30839"/>
    </ligand>
</feature>
<feature type="binding site" evidence="1">
    <location>
        <position position="148"/>
    </location>
    <ligand>
        <name>orotate</name>
        <dbReference type="ChEBI" id="CHEBI:30839"/>
    </ligand>
</feature>
<organism>
    <name type="scientific">Caulobacter vibrioides (strain NA1000 / CB15N)</name>
    <name type="common">Caulobacter crescentus</name>
    <dbReference type="NCBI Taxonomy" id="565050"/>
    <lineage>
        <taxon>Bacteria</taxon>
        <taxon>Pseudomonadati</taxon>
        <taxon>Pseudomonadota</taxon>
        <taxon>Alphaproteobacteria</taxon>
        <taxon>Caulobacterales</taxon>
        <taxon>Caulobacteraceae</taxon>
        <taxon>Caulobacter</taxon>
    </lineage>
</organism>
<evidence type="ECO:0000255" key="1">
    <source>
        <dbReference type="HAMAP-Rule" id="MF_01208"/>
    </source>
</evidence>
<gene>
    <name evidence="1" type="primary">pyrE</name>
    <name type="ordered locus">CCNA_01624</name>
</gene>
<proteinExistence type="inferred from homology"/>
<sequence>MTNDDVLDEFRAAGALREGHFVLSSGLHSPVFLQKNLVFMRPERCERLCKALAQKIIATVGQVDVAVSPAVGGIIPGYETARHLNVPSIYVEREGGGFKFRRGFHLEPGQKVVMVEDIVTTGLSSRECIQAIKDAGGDVVAAACIVDRSGGKADVGVPLIALASLEVPAYPADALPPELAAIPIEDPGSRRLKG</sequence>
<dbReference type="EC" id="2.4.2.10" evidence="1"/>
<dbReference type="EMBL" id="CP001340">
    <property type="protein sequence ID" value="ACL95089.1"/>
    <property type="molecule type" value="Genomic_DNA"/>
</dbReference>
<dbReference type="RefSeq" id="WP_010919429.1">
    <property type="nucleotide sequence ID" value="NC_011916.1"/>
</dbReference>
<dbReference type="RefSeq" id="YP_002516997.1">
    <property type="nucleotide sequence ID" value="NC_011916.1"/>
</dbReference>
<dbReference type="SMR" id="B8H621"/>
<dbReference type="GeneID" id="7331602"/>
<dbReference type="KEGG" id="ccs:CCNA_01624"/>
<dbReference type="PATRIC" id="fig|565050.3.peg.1602"/>
<dbReference type="HOGENOM" id="CLU_074878_3_0_5"/>
<dbReference type="OrthoDB" id="9783570at2"/>
<dbReference type="PhylomeDB" id="B8H621"/>
<dbReference type="UniPathway" id="UPA00070">
    <property type="reaction ID" value="UER00119"/>
</dbReference>
<dbReference type="Proteomes" id="UP000001364">
    <property type="component" value="Chromosome"/>
</dbReference>
<dbReference type="GO" id="GO:0000287">
    <property type="term" value="F:magnesium ion binding"/>
    <property type="evidence" value="ECO:0007669"/>
    <property type="project" value="UniProtKB-UniRule"/>
</dbReference>
<dbReference type="GO" id="GO:0004588">
    <property type="term" value="F:orotate phosphoribosyltransferase activity"/>
    <property type="evidence" value="ECO:0007669"/>
    <property type="project" value="UniProtKB-UniRule"/>
</dbReference>
<dbReference type="GO" id="GO:0044205">
    <property type="term" value="P:'de novo' UMP biosynthetic process"/>
    <property type="evidence" value="ECO:0007669"/>
    <property type="project" value="UniProtKB-UniRule"/>
</dbReference>
<dbReference type="GO" id="GO:0019856">
    <property type="term" value="P:pyrimidine nucleobase biosynthetic process"/>
    <property type="evidence" value="ECO:0007669"/>
    <property type="project" value="InterPro"/>
</dbReference>
<dbReference type="CDD" id="cd06223">
    <property type="entry name" value="PRTases_typeI"/>
    <property type="match status" value="1"/>
</dbReference>
<dbReference type="Gene3D" id="3.40.50.2020">
    <property type="match status" value="1"/>
</dbReference>
<dbReference type="HAMAP" id="MF_01208">
    <property type="entry name" value="PyrE"/>
    <property type="match status" value="1"/>
</dbReference>
<dbReference type="InterPro" id="IPR023031">
    <property type="entry name" value="OPRT"/>
</dbReference>
<dbReference type="InterPro" id="IPR006273">
    <property type="entry name" value="Orotate_PRibTrfase_bac"/>
</dbReference>
<dbReference type="InterPro" id="IPR000836">
    <property type="entry name" value="PRibTrfase_dom"/>
</dbReference>
<dbReference type="InterPro" id="IPR029057">
    <property type="entry name" value="PRTase-like"/>
</dbReference>
<dbReference type="NCBIfam" id="TIGR01367">
    <property type="entry name" value="pyrE_Therm"/>
    <property type="match status" value="1"/>
</dbReference>
<dbReference type="PANTHER" id="PTHR19278">
    <property type="entry name" value="OROTATE PHOSPHORIBOSYLTRANSFERASE"/>
    <property type="match status" value="1"/>
</dbReference>
<dbReference type="PANTHER" id="PTHR19278:SF9">
    <property type="entry name" value="URIDINE 5'-MONOPHOSPHATE SYNTHASE"/>
    <property type="match status" value="1"/>
</dbReference>
<dbReference type="Pfam" id="PF00156">
    <property type="entry name" value="Pribosyltran"/>
    <property type="match status" value="1"/>
</dbReference>
<dbReference type="SUPFAM" id="SSF53271">
    <property type="entry name" value="PRTase-like"/>
    <property type="match status" value="1"/>
</dbReference>
<dbReference type="PROSITE" id="PS00103">
    <property type="entry name" value="PUR_PYR_PR_TRANSFER"/>
    <property type="match status" value="1"/>
</dbReference>
<name>PYRE_CAUVN</name>
<comment type="function">
    <text evidence="1">Catalyzes the transfer of a ribosyl phosphate group from 5-phosphoribose 1-diphosphate to orotate, leading to the formation of orotidine monophosphate (OMP).</text>
</comment>
<comment type="catalytic activity">
    <reaction evidence="1">
        <text>orotidine 5'-phosphate + diphosphate = orotate + 5-phospho-alpha-D-ribose 1-diphosphate</text>
        <dbReference type="Rhea" id="RHEA:10380"/>
        <dbReference type="ChEBI" id="CHEBI:30839"/>
        <dbReference type="ChEBI" id="CHEBI:33019"/>
        <dbReference type="ChEBI" id="CHEBI:57538"/>
        <dbReference type="ChEBI" id="CHEBI:58017"/>
        <dbReference type="EC" id="2.4.2.10"/>
    </reaction>
</comment>
<comment type="cofactor">
    <cofactor evidence="1">
        <name>Mg(2+)</name>
        <dbReference type="ChEBI" id="CHEBI:18420"/>
    </cofactor>
</comment>
<comment type="pathway">
    <text evidence="1">Pyrimidine metabolism; UMP biosynthesis via de novo pathway; UMP from orotate: step 1/2.</text>
</comment>
<comment type="subunit">
    <text evidence="1">Homodimer.</text>
</comment>
<comment type="similarity">
    <text evidence="1">Belongs to the purine/pyrimidine phosphoribosyltransferase family. PyrE subfamily.</text>
</comment>
<reference key="1">
    <citation type="journal article" date="2010" name="J. Bacteriol.">
        <title>The genetic basis of laboratory adaptation in Caulobacter crescentus.</title>
        <authorList>
            <person name="Marks M.E."/>
            <person name="Castro-Rojas C.M."/>
            <person name="Teiling C."/>
            <person name="Du L."/>
            <person name="Kapatral V."/>
            <person name="Walunas T.L."/>
            <person name="Crosson S."/>
        </authorList>
    </citation>
    <scope>NUCLEOTIDE SEQUENCE [LARGE SCALE GENOMIC DNA]</scope>
    <source>
        <strain>NA1000 / CB15N</strain>
    </source>
</reference>
<keyword id="KW-0328">Glycosyltransferase</keyword>
<keyword id="KW-0460">Magnesium</keyword>
<keyword id="KW-0665">Pyrimidine biosynthesis</keyword>
<keyword id="KW-1185">Reference proteome</keyword>
<keyword id="KW-0808">Transferase</keyword>